<evidence type="ECO:0000250" key="1"/>
<evidence type="ECO:0000255" key="2"/>
<evidence type="ECO:0000255" key="3">
    <source>
        <dbReference type="PROSITE-ProRule" id="PRU00159"/>
    </source>
</evidence>
<evidence type="ECO:0000255" key="4">
    <source>
        <dbReference type="PROSITE-ProRule" id="PRU00184"/>
    </source>
</evidence>
<evidence type="ECO:0000255" key="5">
    <source>
        <dbReference type="PROSITE-ProRule" id="PRU00316"/>
    </source>
</evidence>
<evidence type="ECO:0000255" key="6">
    <source>
        <dbReference type="PROSITE-ProRule" id="PRU00883"/>
    </source>
</evidence>
<evidence type="ECO:0000255" key="7">
    <source>
        <dbReference type="PROSITE-ProRule" id="PRU10028"/>
    </source>
</evidence>
<evidence type="ECO:0000256" key="8">
    <source>
        <dbReference type="SAM" id="MobiDB-lite"/>
    </source>
</evidence>
<evidence type="ECO:0000269" key="9">
    <source>
    </source>
</evidence>
<evidence type="ECO:0000269" key="10">
    <source>
    </source>
</evidence>
<evidence type="ECO:0000269" key="11">
    <source>
    </source>
</evidence>
<evidence type="ECO:0000269" key="12">
    <source>
    </source>
</evidence>
<evidence type="ECO:0000269" key="13">
    <source>
    </source>
</evidence>
<evidence type="ECO:0000269" key="14">
    <source>
    </source>
</evidence>
<evidence type="ECO:0000269" key="15">
    <source>
    </source>
</evidence>
<evidence type="ECO:0000269" key="16">
    <source>
    </source>
</evidence>
<evidence type="ECO:0000269" key="17">
    <source>
    </source>
</evidence>
<evidence type="ECO:0000269" key="18">
    <source>
    </source>
</evidence>
<evidence type="ECO:0000269" key="19">
    <source>
    </source>
</evidence>
<evidence type="ECO:0000303" key="20">
    <source>
    </source>
</evidence>
<evidence type="ECO:0000305" key="21"/>
<evidence type="ECO:0007744" key="22">
    <source>
    </source>
</evidence>
<evidence type="ECO:0007744" key="23">
    <source>
    </source>
</evidence>
<evidence type="ECO:0007744" key="24">
    <source>
    </source>
</evidence>
<evidence type="ECO:0007744" key="25">
    <source>
    </source>
</evidence>
<evidence type="ECO:0007744" key="26">
    <source>
    </source>
</evidence>
<evidence type="ECO:0007829" key="27">
    <source>
        <dbReference type="PDB" id="2BBA"/>
    </source>
</evidence>
<evidence type="ECO:0007829" key="28">
    <source>
        <dbReference type="PDB" id="2E7H"/>
    </source>
</evidence>
<evidence type="ECO:0007829" key="29">
    <source>
        <dbReference type="PDB" id="2HLE"/>
    </source>
</evidence>
<evidence type="ECO:0007829" key="30">
    <source>
        <dbReference type="PDB" id="2QKQ"/>
    </source>
</evidence>
<evidence type="ECO:0007829" key="31">
    <source>
        <dbReference type="PDB" id="2VWX"/>
    </source>
</evidence>
<evidence type="ECO:0007829" key="32">
    <source>
        <dbReference type="PDB" id="6FNI"/>
    </source>
</evidence>
<evidence type="ECO:0007829" key="33">
    <source>
        <dbReference type="PDB" id="6FNJ"/>
    </source>
</evidence>
<evidence type="ECO:0007829" key="34">
    <source>
        <dbReference type="PDB" id="6FNK"/>
    </source>
</evidence>
<gene>
    <name type="primary">EPHB4</name>
    <name type="synonym">HTK</name>
    <name type="synonym">MYK1</name>
    <name type="synonym">TYRO11</name>
</gene>
<comment type="function">
    <text evidence="9 11 14 18">Receptor tyrosine kinase which binds promiscuously transmembrane ephrin-B family ligands residing on adjacent cells, leading to contact-dependent bidirectional signaling into neighboring cells. The signaling pathway downstream of the receptor is referred to as forward signaling while the signaling pathway downstream of the ephrin ligand is referred to as reverse signaling. Together with its cognate ligand/functional ligand EFNB2 it is involved in the regulation of cell adhesion and migration, and plays a central role in heart morphogenesis, angiogenesis and blood vessel remodeling and permeability. EPHB4-mediated forward signaling controls cellular repulsion and segregation from EFNB2-expressing cells.</text>
</comment>
<comment type="catalytic activity">
    <reaction evidence="7">
        <text>L-tyrosyl-[protein] + ATP = O-phospho-L-tyrosyl-[protein] + ADP + H(+)</text>
        <dbReference type="Rhea" id="RHEA:10596"/>
        <dbReference type="Rhea" id="RHEA-COMP:10136"/>
        <dbReference type="Rhea" id="RHEA-COMP:20101"/>
        <dbReference type="ChEBI" id="CHEBI:15378"/>
        <dbReference type="ChEBI" id="CHEBI:30616"/>
        <dbReference type="ChEBI" id="CHEBI:46858"/>
        <dbReference type="ChEBI" id="CHEBI:61978"/>
        <dbReference type="ChEBI" id="CHEBI:456216"/>
        <dbReference type="EC" id="2.7.10.1"/>
    </reaction>
</comment>
<comment type="subunit">
    <text evidence="1 18">Heterotetramer upon binding of the ligand. The heterotetramer is composed of an ephrin dimer and a receptor dimer. Oligomerization is probably required to induce biological responses (By similarity). Interacts with RASA1; the interaction depends on EPHB4 tyrosine-phosphorylation (PubMed:30578106).</text>
</comment>
<comment type="interaction">
    <interactant intactId="EBI-702121">
        <id>P54760</id>
    </interactant>
    <interactant intactId="EBI-7532268">
        <id>P52799</id>
        <label>EFNB2</label>
    </interactant>
    <organismsDiffer>false</organismsDiffer>
    <experiments>6</experiments>
</comment>
<comment type="interaction">
    <interactant intactId="EBI-702121">
        <id>P54760</id>
    </interactant>
    <interactant intactId="EBI-1383718">
        <id>P54756</id>
        <label>EPHA5</label>
    </interactant>
    <organismsDiffer>false</organismsDiffer>
    <experiments>2</experiments>
</comment>
<comment type="interaction">
    <interactant intactId="EBI-702121">
        <id>P54760</id>
    </interactant>
    <interactant intactId="EBI-3950019">
        <id>Q9UF33</id>
        <label>EPHA6</label>
    </interactant>
    <organismsDiffer>false</organismsDiffer>
    <experiments>2</experiments>
</comment>
<comment type="interaction">
    <interactant intactId="EBI-702121">
        <id>P54760</id>
    </interactant>
    <interactant intactId="EBI-1383428">
        <id>Q15375</id>
        <label>EPHA7</label>
    </interactant>
    <organismsDiffer>false</organismsDiffer>
    <experiments>3</experiments>
</comment>
<comment type="interaction">
    <interactant intactId="EBI-702121">
        <id>P54760</id>
    </interactant>
    <interactant intactId="EBI-1027362">
        <id>P01588</id>
        <label>EPO</label>
    </interactant>
    <organismsDiffer>false</organismsDiffer>
    <experiments>6</experiments>
</comment>
<comment type="subcellular location">
    <subcellularLocation>
        <location evidence="15 19">Cell membrane</location>
        <topology evidence="19">Single-pass type I membrane protein</topology>
    </subcellularLocation>
</comment>
<comment type="alternative products">
    <event type="alternative splicing"/>
    <isoform>
        <id>P54760-1</id>
        <name>1</name>
        <sequence type="displayed"/>
    </isoform>
    <isoform>
        <id>P54760-2</id>
        <name>2</name>
        <sequence type="described" ref="VSP_056024 VSP_056025"/>
    </isoform>
    <isoform>
        <id>P54760-3</id>
        <name>3</name>
        <sequence type="described" ref="VSP_056020 VSP_056021"/>
    </isoform>
    <isoform>
        <id>P54760-4</id>
        <name>4</name>
        <sequence type="described" ref="VSP_056022 VSP_056023"/>
    </isoform>
</comment>
<comment type="tissue specificity">
    <text evidence="19">Abundantly expressed in placenta but also detected in kidney, liver, lung, pancreas, skeletal muscle and heart. Expressed in primitive and myeloid, but not lymphoid, hematopoietic cells. Also observed in cell lines derived from liver, breast, colon, lung, melanocyte and cervix.</text>
</comment>
<comment type="developmental stage">
    <text evidence="19">Expressed in fetal heart, lung, liver and to a lower extent in brain. Not expressed in adult brain.</text>
</comment>
<comment type="PTM">
    <text>Phosphorylated; autophosphorylation is stimulated by EFNB2.</text>
</comment>
<comment type="disease" evidence="14">
    <disease id="DI-04930">
        <name>Lymphatic malformation 7</name>
        <acronym>LMPHM7</acronym>
        <description>A form of primary lymphedema, a disease characterized by swelling of body parts due to developmental anomalies and functional defects of the lymphatic system. Patients with lymphedema may suffer from recurrent local infections. LMPHM7 is an autosomal dominant form with variable expressivity. Some individuals present with severe non-immune hydrops fetalis, which may cause perinatal demise or fully resolve after the neonatal period. Others present with no edema and have milder clinical features, such as atrial septal defect or varicose veins as adults.</description>
        <dbReference type="MIM" id="617300"/>
    </disease>
    <text>The disease is caused by variants affecting the gene represented in this entry.</text>
</comment>
<comment type="disease" evidence="15 16 17 18">
    <disease id="DI-05392">
        <name>Capillary malformation-arteriovenous malformation 2</name>
        <acronym>CMAVM2</acronym>
        <description>An autosomal dominant disorder characterized by multiple, round to oval or more irregularly shaped macules that are pinkish red in color and are randomly distributed across the body. These capillary malformations are associated with either arteriovenous malformation, arteriovenous fistula, or Parkes Weber syndrome.</description>
        <dbReference type="MIM" id="618196"/>
    </disease>
    <text>The disease is caused by variants affecting the gene represented in this entry.</text>
</comment>
<comment type="similarity">
    <text evidence="3">Belongs to the protein kinase superfamily. Tyr protein kinase family. Ephrin receptor subfamily.</text>
</comment>
<organism>
    <name type="scientific">Homo sapiens</name>
    <name type="common">Human</name>
    <dbReference type="NCBI Taxonomy" id="9606"/>
    <lineage>
        <taxon>Eukaryota</taxon>
        <taxon>Metazoa</taxon>
        <taxon>Chordata</taxon>
        <taxon>Craniata</taxon>
        <taxon>Vertebrata</taxon>
        <taxon>Euteleostomi</taxon>
        <taxon>Mammalia</taxon>
        <taxon>Eutheria</taxon>
        <taxon>Euarchontoglires</taxon>
        <taxon>Primates</taxon>
        <taxon>Haplorrhini</taxon>
        <taxon>Catarrhini</taxon>
        <taxon>Hominidae</taxon>
        <taxon>Homo</taxon>
    </lineage>
</organism>
<accession>P54760</accession>
<accession>B5A970</accession>
<accession>B5A971</accession>
<accession>B5A972</accession>
<accession>Q7Z635</accession>
<accession>Q9BTA5</accession>
<accession>Q9BXP0</accession>
<proteinExistence type="evidence at protein level"/>
<sequence>MELRVLLCWASLAAALEETLLNTKLETADLKWVTFPQVDGQWEELSGLDEEQHSVRTYEVCDVQRAPGQAHWLRTGWVPRRGAVHVYATLRFTMLECLSLPRAGRSCKETFTVFYYESDADTATALTPAWMENPYIKVDTVAAEHLTRKRPGAEATGKVNVKTLRLGPLSKAGFYLAFQDQGACMALLSLHLFYKKCAQLTVNLTRFPETVPRELVVPVAGSCVVDAVPAPGPSPSLYCREDGQWAEQPVTGCSCAPGFEAAEGNTKCRACAQGTFKPLSGEGSCQPCPANSHSNTIGSAVCQCRVGYFRARTDPRGAPCTTPPSAPRSVVSRLNGSSLHLEWSAPLESGGREDLTYALRCRECRPGGSCAPCGGDLTFDPGPRDLVEPWVVVRGLRPDFTYTFEVTALNGVSSLATGPVPFEPVNVTTDREVPPAVSDIRVTRSSPSSLSLAWAVPRAPSGAVLDYEVKYHEKGAEGPSSVRFLKTSENRAELRGLKRGASYLVQVRARSEAGYGPFGQEHHSQTQLDESEGWREQLALIAGTAVVGVVLVLVVIVVAVLCLRKQSNGREAEYSDKHGQYLIGHGTKVYIDPFTYEDPNEAVREFAKEIDVSYVKIEEVIGAGEFGEVCRGRLKAPGKKESCVAIKTLKGGYTERQRREFLSEASIMGQFEHPNIIRLEGVVTNSMPVMILTEFMENGALDSFLRLNDGQFTVIQLVGMLRGIASGMRYLAEMSYVHRDLAARNILVNSNLVCKVSDFGLSRFLEENSSDPTYTSSLGGKIPIRWTAPEAIAFRKFTSASDAWSYGIVMWEVMSFGERPYWDMSNQDVINAIEQDYRLPPPPDCPTSLHQLMLDCWQKDRNARPRFPQVVSALDKMIRNPASLKIVARENGGASHPLLDQRQPHYSAFGSVGEWLRAIKMGRYEESFAAAGFGSFELVSQISAEDLLRIGVTLAGHQKKILASVQHMKSQAKPGTPGGTGGPAPQY</sequence>
<reference key="1">
    <citation type="journal article" date="1994" name="J. Biol. Chem.">
        <title>Cloning and characterization of HTK, a novel transmembrane tyrosine kinase of the EPH subfamily.</title>
        <authorList>
            <person name="Bennett B.D."/>
            <person name="Wang Z."/>
            <person name="Kuang W.J."/>
            <person name="Wang A."/>
            <person name="Groopman J.E."/>
            <person name="Goeddel D.V."/>
            <person name="Scadden D.T."/>
        </authorList>
    </citation>
    <scope>NUCLEOTIDE SEQUENCE [MRNA] (ISOFORM 1)</scope>
    <scope>SUBCELLULAR LOCATION</scope>
    <scope>AUTOPHOSPHORYLATION</scope>
    <scope>TISSUE SPECIFICITY</scope>
    <scope>DEVELOPMENTAL STAGE</scope>
</reference>
<reference key="2">
    <citation type="journal article" date="2001" name="Nucleic Acids Res.">
        <title>Comparative analysis of the gene-dense ACHE/TFR2 region on human chromosome 7q22 with the orthologous region on mouse chromosome 5.</title>
        <authorList>
            <person name="Wilson M.D."/>
            <person name="Riemer C."/>
            <person name="Martindale D.W."/>
            <person name="Schnupf P."/>
            <person name="Boright A.P."/>
            <person name="Cheung T.L."/>
            <person name="Hardy D.M."/>
            <person name="Schwartz S."/>
            <person name="Scherer S.W."/>
            <person name="Tsui L.-C."/>
            <person name="Miller W."/>
            <person name="Koop B.F."/>
        </authorList>
    </citation>
    <scope>NUCLEOTIDE SEQUENCE [GENOMIC DNA]</scope>
</reference>
<reference key="3">
    <citation type="journal article" date="2008" name="Arthritis Res. Ther.">
        <title>Novel splice variants derived from the receptor tyrosine kinase superfamily are potential therapeutics for rheumatoid arthritis.</title>
        <authorList>
            <person name="Jin P."/>
            <person name="Zhang J."/>
            <person name="Sumariwalla P.F."/>
            <person name="Ni I."/>
            <person name="Jorgensen B."/>
            <person name="Crawford D."/>
            <person name="Phillips S."/>
            <person name="Feldmann M."/>
            <person name="Shepard H.M."/>
            <person name="Paleolog E.M."/>
        </authorList>
    </citation>
    <scope>NUCLEOTIDE SEQUENCE [MRNA] (ISOFORMS 2; 3 AND 4)</scope>
    <scope>ALTERNATIVE SPLICING</scope>
</reference>
<reference key="4">
    <citation type="journal article" date="2004" name="Genome Res.">
        <title>The status, quality, and expansion of the NIH full-length cDNA project: the Mammalian Gene Collection (MGC).</title>
        <authorList>
            <consortium name="The MGC Project Team"/>
        </authorList>
    </citation>
    <scope>NUCLEOTIDE SEQUENCE [LARGE SCALE MRNA] (ISOFORM 1)</scope>
    <scope>VARIANT ARG-162</scope>
    <source>
        <tissue>Ovary</tissue>
        <tissue>Pancreas</tissue>
    </source>
</reference>
<reference key="5">
    <citation type="journal article" date="1997" name="Cell">
        <title>Unified nomenclature for Eph family receptors and their ligands, the ephrins.</title>
        <authorList>
            <consortium name="Eph nomenclature committee"/>
        </authorList>
    </citation>
    <scope>NOMENCLATURE</scope>
</reference>
<reference key="6">
    <citation type="journal article" date="2003" name="J. Cell Sci.">
        <title>Forward EphB4 signaling in endothelial cells controls cellular repulsion and segregation from ephrinB2 positive cells.</title>
        <authorList>
            <person name="Fueller T."/>
            <person name="Korff T."/>
            <person name="Kilian A."/>
            <person name="Dandekar G."/>
            <person name="Augustin H.G."/>
        </authorList>
    </citation>
    <scope>FUNCTION IN ANGIOGENESIS</scope>
    <scope>FUNCTION IN CELL ADHESION</scope>
    <scope>FUNCTION IN CELL MIGRATION</scope>
</reference>
<reference key="7">
    <citation type="journal article" date="2006" name="EMBO J.">
        <title>EphB4 controls blood vascular morphogenesis during postnatal angiogenesis.</title>
        <authorList>
            <person name="Erber R."/>
            <person name="Eichelsbacher U."/>
            <person name="Powajbo V."/>
            <person name="Korn T."/>
            <person name="Djonov V."/>
            <person name="Lin J."/>
            <person name="Hammes H.P."/>
            <person name="Grobholz R."/>
            <person name="Ullrich A."/>
            <person name="Vajkoczy P."/>
        </authorList>
    </citation>
    <scope>FUNCTION IN ANGIOGENESIS</scope>
</reference>
<reference key="8">
    <citation type="journal article" date="2008" name="Mol. Cell">
        <title>Kinase-selective enrichment enables quantitative phosphoproteomics of the kinome across the cell cycle.</title>
        <authorList>
            <person name="Daub H."/>
            <person name="Olsen J.V."/>
            <person name="Bairlein M."/>
            <person name="Gnad F."/>
            <person name="Oppermann F.S."/>
            <person name="Korner R."/>
            <person name="Greff Z."/>
            <person name="Keri G."/>
            <person name="Stemmann O."/>
            <person name="Mann M."/>
        </authorList>
    </citation>
    <scope>PHOSPHORYLATION [LARGE SCALE ANALYSIS] AT SER-911 AND THR-976</scope>
    <scope>IDENTIFICATION BY MASS SPECTROMETRY [LARGE SCALE ANALYSIS]</scope>
    <source>
        <tissue>Cervix carcinoma</tissue>
    </source>
</reference>
<reference key="9">
    <citation type="journal article" date="2008" name="Proc. Natl. Acad. Sci. U.S.A.">
        <title>A quantitative atlas of mitotic phosphorylation.</title>
        <authorList>
            <person name="Dephoure N."/>
            <person name="Zhou C."/>
            <person name="Villen J."/>
            <person name="Beausoleil S.A."/>
            <person name="Bakalarski C.E."/>
            <person name="Elledge S.J."/>
            <person name="Gygi S.P."/>
        </authorList>
    </citation>
    <scope>PHOSPHORYLATION [LARGE SCALE ANALYSIS] AT THR-976</scope>
    <scope>IDENTIFICATION BY MASS SPECTROMETRY [LARGE SCALE ANALYSIS]</scope>
    <source>
        <tissue>Cervix carcinoma</tissue>
    </source>
</reference>
<reference key="10">
    <citation type="journal article" date="2009" name="Anal. Chem.">
        <title>Lys-N and trypsin cover complementary parts of the phosphoproteome in a refined SCX-based approach.</title>
        <authorList>
            <person name="Gauci S."/>
            <person name="Helbig A.O."/>
            <person name="Slijper M."/>
            <person name="Krijgsveld J."/>
            <person name="Heck A.J."/>
            <person name="Mohammed S."/>
        </authorList>
    </citation>
    <scope>IDENTIFICATION BY MASS SPECTROMETRY [LARGE SCALE ANALYSIS]</scope>
</reference>
<reference key="11">
    <citation type="journal article" date="2009" name="Mol. Cell. Proteomics">
        <title>Large-scale proteomics analysis of the human kinome.</title>
        <authorList>
            <person name="Oppermann F.S."/>
            <person name="Gnad F."/>
            <person name="Olsen J.V."/>
            <person name="Hornberger R."/>
            <person name="Greff Z."/>
            <person name="Keri G."/>
            <person name="Mann M."/>
            <person name="Daub H."/>
        </authorList>
    </citation>
    <scope>PHOSPHORYLATION [LARGE SCALE ANALYSIS] AT SER-911; THR-976 AND TYR-987</scope>
    <scope>IDENTIFICATION BY MASS SPECTROMETRY [LARGE SCALE ANALYSIS]</scope>
</reference>
<reference key="12">
    <citation type="journal article" date="2011" name="BMC Syst. Biol.">
        <title>Initial characterization of the human central proteome.</title>
        <authorList>
            <person name="Burkard T.R."/>
            <person name="Planyavsky M."/>
            <person name="Kaupe I."/>
            <person name="Breitwieser F.P."/>
            <person name="Buerckstuemmer T."/>
            <person name="Bennett K.L."/>
            <person name="Superti-Furga G."/>
            <person name="Colinge J."/>
        </authorList>
    </citation>
    <scope>IDENTIFICATION BY MASS SPECTROMETRY [LARGE SCALE ANALYSIS]</scope>
</reference>
<reference key="13">
    <citation type="journal article" date="2013" name="J. Proteome Res.">
        <title>Toward a comprehensive characterization of a human cancer cell phosphoproteome.</title>
        <authorList>
            <person name="Zhou H."/>
            <person name="Di Palma S."/>
            <person name="Preisinger C."/>
            <person name="Peng M."/>
            <person name="Polat A.N."/>
            <person name="Heck A.J."/>
            <person name="Mohammed S."/>
        </authorList>
    </citation>
    <scope>PHOSPHORYLATION [LARGE SCALE ANALYSIS] AT SER-769; SER-770 AND THR-976</scope>
    <scope>IDENTIFICATION BY MASS SPECTROMETRY [LARGE SCALE ANALYSIS]</scope>
    <source>
        <tissue>Cervix carcinoma</tissue>
        <tissue>Erythroleukemia</tissue>
    </source>
</reference>
<reference key="14">
    <citation type="journal article" date="2014" name="J. Proteomics">
        <title>An enzyme assisted RP-RPLC approach for in-depth analysis of human liver phosphoproteome.</title>
        <authorList>
            <person name="Bian Y."/>
            <person name="Song C."/>
            <person name="Cheng K."/>
            <person name="Dong M."/>
            <person name="Wang F."/>
            <person name="Huang J."/>
            <person name="Sun D."/>
            <person name="Wang L."/>
            <person name="Ye M."/>
            <person name="Zou H."/>
        </authorList>
    </citation>
    <scope>PHOSPHORYLATION [LARGE SCALE ANALYSIS] AT SER-943</scope>
    <scope>IDENTIFICATION BY MASS SPECTROMETRY [LARGE SCALE ANALYSIS]</scope>
    <source>
        <tissue>Liver</tissue>
    </source>
</reference>
<reference key="15">
    <citation type="journal article" date="2006" name="J. Biol. Chem.">
        <title>Structural and biophysical characterization of the EphB4*ephrinB2 protein-protein interaction and receptor specificity.</title>
        <authorList>
            <person name="Chrencik J.E."/>
            <person name="Brooun A."/>
            <person name="Kraus M.L."/>
            <person name="Recht M.I."/>
            <person name="Kolatkar A.R."/>
            <person name="Han G.W."/>
            <person name="Seifert J.M."/>
            <person name="Widmer H."/>
            <person name="Auer M."/>
            <person name="Kuhn P."/>
        </authorList>
    </citation>
    <scope>X-RAY CRYSTALLOGRAPHY (2.05 ANGSTROMS) OF 17-196 IN COMPLEX WITH EFNB2</scope>
    <scope>MUTAGENESIS OF LEU-95</scope>
    <scope>DISULFIDE BOND</scope>
</reference>
<reference key="16">
    <citation type="journal article" date="2006" name="Structure">
        <title>Structure and thermodynamic characterization of the EphB4/Ephrin-B2 antagonist peptide complex reveals the determinants for receptor specificity.</title>
        <authorList>
            <person name="Chrencik J.E."/>
            <person name="Brooun A."/>
            <person name="Recht M.I."/>
            <person name="Kraus M.L."/>
            <person name="Koolpe M."/>
            <person name="Kolatkar A.R."/>
            <person name="Bruce R.H."/>
            <person name="Martiny-Baron G."/>
            <person name="Widmer H."/>
            <person name="Pasquale E.B."/>
            <person name="Kuhn P."/>
        </authorList>
    </citation>
    <scope>X-RAY CRYSTALLOGRAPHY (1.65 ANGSTROMS) OF 17-196 IN COMPLEX WITH ANTAGONISTIC PEPTIDE</scope>
    <scope>DISULFIDE BOND</scope>
</reference>
<reference key="17">
    <citation type="submission" date="2007-07" db="PDB data bank">
        <title>Solution structure of the second FN3 domain from human ephrin type-B receptor 4.</title>
        <authorList>
            <consortium name="RIKEN structural genomics initiative (RSGI)"/>
        </authorList>
    </citation>
    <scope>STRUCTURE BY NMR OF 434-529</scope>
</reference>
<reference key="18">
    <citation type="journal article" date="2007" name="Nature">
        <title>Patterns of somatic mutation in human cancer genomes.</title>
        <authorList>
            <person name="Greenman C."/>
            <person name="Stephens P."/>
            <person name="Smith R."/>
            <person name="Dalgliesh G.L."/>
            <person name="Hunter C."/>
            <person name="Bignell G."/>
            <person name="Davies H."/>
            <person name="Teague J."/>
            <person name="Butler A."/>
            <person name="Stevens C."/>
            <person name="Edkins S."/>
            <person name="O'Meara S."/>
            <person name="Vastrik I."/>
            <person name="Schmidt E.E."/>
            <person name="Avis T."/>
            <person name="Barthorpe S."/>
            <person name="Bhamra G."/>
            <person name="Buck G."/>
            <person name="Choudhury B."/>
            <person name="Clements J."/>
            <person name="Cole J."/>
            <person name="Dicks E."/>
            <person name="Forbes S."/>
            <person name="Gray K."/>
            <person name="Halliday K."/>
            <person name="Harrison R."/>
            <person name="Hills K."/>
            <person name="Hinton J."/>
            <person name="Jenkinson A."/>
            <person name="Jones D."/>
            <person name="Menzies A."/>
            <person name="Mironenko T."/>
            <person name="Perry J."/>
            <person name="Raine K."/>
            <person name="Richardson D."/>
            <person name="Shepherd R."/>
            <person name="Small A."/>
            <person name="Tofts C."/>
            <person name="Varian J."/>
            <person name="Webb T."/>
            <person name="West S."/>
            <person name="Widaa S."/>
            <person name="Yates A."/>
            <person name="Cahill D.P."/>
            <person name="Louis D.N."/>
            <person name="Goldstraw P."/>
            <person name="Nicholson A.G."/>
            <person name="Brasseur F."/>
            <person name="Looijenga L."/>
            <person name="Weber B.L."/>
            <person name="Chiew Y.-E."/>
            <person name="DeFazio A."/>
            <person name="Greaves M.F."/>
            <person name="Green A.R."/>
            <person name="Campbell P."/>
            <person name="Birney E."/>
            <person name="Easton D.F."/>
            <person name="Chenevix-Trench G."/>
            <person name="Tan M.-H."/>
            <person name="Khoo S.K."/>
            <person name="Teh B.T."/>
            <person name="Yuen S.T."/>
            <person name="Leung S.Y."/>
            <person name="Wooster R."/>
            <person name="Futreal P.A."/>
            <person name="Stratton M.R."/>
        </authorList>
    </citation>
    <scope>VARIANTS [LARGE SCALE ANALYSIS] LEU-67; ILE-113; LEU-346; VAL-371; GLU-576; HIS-678; THR-882; TRP-889 AND ASP-890</scope>
</reference>
<reference key="19">
    <citation type="journal article" date="2016" name="J. Clin. Invest.">
        <title>EPHB4 kinase-inactivating mutations cause autosomal dominant lymphatic-related hydrops fetalis.</title>
        <authorList>
            <person name="Martin-Almedina S."/>
            <person name="Martinez-Corral I."/>
            <person name="Holdhus R."/>
            <person name="Vicente A."/>
            <person name="Fotiou E."/>
            <person name="Lin S."/>
            <person name="Petersen K."/>
            <person name="Simpson M.A."/>
            <person name="Hoischen A."/>
            <person name="Gilissen C."/>
            <person name="Jeffery H."/>
            <person name="Atton G."/>
            <person name="Karapouliou C."/>
            <person name="Brice G."/>
            <person name="Gordon K."/>
            <person name="Wiseman J.W."/>
            <person name="Wedin M."/>
            <person name="Rockson S.G."/>
            <person name="Jeffery S."/>
            <person name="Mortimer P.S."/>
            <person name="Snyder M.P."/>
            <person name="Berland S."/>
            <person name="Mansour S."/>
            <person name="Makinen T."/>
            <person name="Ostergaard P."/>
        </authorList>
    </citation>
    <scope>INVOLVEMENT IN LMPHM7</scope>
    <scope>VARIANTS LMPHM7 GLN-739 AND SER-782</scope>
    <scope>CHARACTERIZATION OF VARIANTS LMPHM7 GLU-739 AND SER-782</scope>
    <scope>FUNCTION</scope>
</reference>
<reference key="20">
    <citation type="journal article" date="2017" name="Circulation">
        <title>Germline loss-of-function mutations in EPHB4 cause a second form of capillary malformation-arteriovenous malformation (CM-AVM2) deregulating RAS-MAPK signaling.</title>
        <authorList>
            <person name="Amyere M."/>
            <person name="Revencu N."/>
            <person name="Helaers R."/>
            <person name="Pairet E."/>
            <person name="Baselga E."/>
            <person name="Cordisco M."/>
            <person name="Chung W."/>
            <person name="Dubois J."/>
            <person name="Lacour J.P."/>
            <person name="Martorell L."/>
            <person name="Mazereeuw-Hautier J."/>
            <person name="Pyeritz R.E."/>
            <person name="Amor D.J."/>
            <person name="Bisdorff A."/>
            <person name="Blei F."/>
            <person name="Bombei H."/>
            <person name="Dompmartin A."/>
            <person name="Brooks D."/>
            <person name="Dupont J."/>
            <person name="Gonzalez-Ensenat M.A."/>
            <person name="Frieden I."/>
            <person name="Gerard M."/>
            <person name="Kvarnung M."/>
            <person name="Hanson-Kahn A.K."/>
            <person name="Hudgins L."/>
            <person name="Leaute-Labreze C."/>
            <person name="McCuaig C."/>
            <person name="Metry D."/>
            <person name="Parent P."/>
            <person name="Paul C."/>
            <person name="Petit F."/>
            <person name="Phan A."/>
            <person name="Quere I."/>
            <person name="Salhi A."/>
            <person name="Turner A."/>
            <person name="Vabres P."/>
            <person name="Vicente A."/>
            <person name="Wargon O."/>
            <person name="Watanabe S."/>
            <person name="Weibel L."/>
            <person name="Wilson A."/>
            <person name="Willing M."/>
            <person name="Mulliken J.B."/>
            <person name="Boon L.M."/>
            <person name="Vikkula M."/>
        </authorList>
    </citation>
    <scope>VARIANTS CMAVM2 LYS-59; PRO-74; TYR-115 DEL; 130-TRP--TYR-987 DEL; 161-VAL-LYS-162 DELINS LEU; PRO-187; 244-GLN--TYR-987 DEL; ARG-268; 352-ARG--TYR-987 DEL; 375-GLY--TYR-987 DEL; 431-ARG--TYR-987 DEL; GLY-469; ARG-516; 520-GLN--TYR-987 DEL; 596-TYR--TYR-987 DEL; TRP-656; LYS-664; THR-725; 739-ARG--TYR-987 DEL; ASP-745; ARG-789; SER-789; 806-TYR--TYR-987 DEL; ARG-807; LEU-820; THR-820; TRP-838; ARG-845; TYR-856; TRP-864 AND PRO-874</scope>
    <scope>CHARACTERIZATION OF VARIANTS CMAVM2 LYS-664; TRP-838; ARG-845 AND TRP-864</scope>
    <scope>INVOLVEMENT IN CMAVM2</scope>
    <scope>SUBCELLULAR LOCATION</scope>
</reference>
<reference key="21">
    <citation type="journal article" date="2017" name="Pediatr. Dermatol.">
        <title>EPHB4 mutation implicated in capillary malformation-arteriovenous malformation syndrome: A case report.</title>
        <authorList>
            <person name="Yu J."/>
            <person name="Streicher J.L."/>
            <person name="Medne L."/>
            <person name="Krantz I.D."/>
            <person name="Yan A.C."/>
        </authorList>
    </citation>
    <scope>VARIANT CMAVM2 GLY-802</scope>
    <scope>INVOLVEMENT IN CMAVM2</scope>
</reference>
<reference key="22">
    <citation type="journal article" date="2018" name="Brain">
        <title>Loss of function mutations in EPHB4 are responsible for vein of Galen aneurysmal malformation.</title>
        <authorList>
            <person name="Vivanti A."/>
            <person name="Ozanne A."/>
            <person name="Grondin C."/>
            <person name="Saliou G."/>
            <person name="Quevarec L."/>
            <person name="Maurey H."/>
            <person name="Aubourg P."/>
            <person name="Benachi A."/>
            <person name="Gut M."/>
            <person name="Gut I."/>
            <person name="Martinovic J."/>
            <person name="Senat M.V."/>
            <person name="Tawk M."/>
            <person name="Melki J."/>
        </authorList>
    </citation>
    <scope>VARIANTS CMAVM2 ARG-107 AND GLU-870</scope>
    <scope>INVOLVEMENT IN CMAVM2</scope>
</reference>
<reference key="23">
    <citation type="journal article" date="2019" name="Neuron">
        <title>Mutations in chromatin modifier and ephrin signaling genes in vein of Galen malformation.</title>
        <authorList>
            <person name="Duran D."/>
            <person name="Zeng X."/>
            <person name="Jin S.C."/>
            <person name="Choi J."/>
            <person name="Nelson-Williams C."/>
            <person name="Yatsula B."/>
            <person name="Gaillard J."/>
            <person name="Furey C.G."/>
            <person name="Lu Q."/>
            <person name="Timberlake A.T."/>
            <person name="Dong W."/>
            <person name="Sorscher M.A."/>
            <person name="Loring E."/>
            <person name="Klein J."/>
            <person name="Allocco A."/>
            <person name="Hunt A."/>
            <person name="Conine S."/>
            <person name="Karimy J.K."/>
            <person name="Youngblood M.W."/>
            <person name="Zhang J."/>
            <person name="DiLuna M.L."/>
            <person name="Matouk C.C."/>
            <person name="Mane S."/>
            <person name="Tikhonova I.R."/>
            <person name="Castaldi C."/>
            <person name="Lopez-Giraldez F."/>
            <person name="Knight J."/>
            <person name="Haider S."/>
            <person name="Soban M."/>
            <person name="Alper S.L."/>
            <person name="Komiyama M."/>
            <person name="Ducruet A.F."/>
            <person name="Zabramski J.M."/>
            <person name="Dardik A."/>
            <person name="Walcott B.P."/>
            <person name="Stapleton C.J."/>
            <person name="Aagaard-Kienitz B."/>
            <person name="Rodesch G."/>
            <person name="Jackson E."/>
            <person name="Smith E.R."/>
            <person name="Orbach D.B."/>
            <person name="Berenstein A."/>
            <person name="Bilguvar K."/>
            <person name="Vikkula M."/>
            <person name="Gunel M."/>
            <person name="Lifton R.P."/>
            <person name="Kahle K.T."/>
        </authorList>
    </citation>
    <scope>VARIANT GLY-509</scope>
    <scope>CHARACTERIZATION OF VARIANT GLY-509</scope>
    <scope>VARIANTS CMAVM2 ASN-650 AND LEU-867</scope>
    <scope>CHARACTERIZATION OF VARIANTS CMAVM2 ASN-650 AND LEU-867</scope>
    <scope>INVOLVEMENT IN CMAVM2</scope>
    <scope>FUNCTION</scope>
    <scope>INTERACTION WITH RASA1</scope>
</reference>
<dbReference type="EC" id="2.7.10.1"/>
<dbReference type="EMBL" id="U07695">
    <property type="protein sequence ID" value="AAA20598.1"/>
    <property type="molecule type" value="mRNA"/>
</dbReference>
<dbReference type="EMBL" id="AF312032">
    <property type="protein sequence ID" value="AAK21010.1"/>
    <property type="molecule type" value="Genomic_DNA"/>
</dbReference>
<dbReference type="EMBL" id="EU826608">
    <property type="protein sequence ID" value="ACF47644.1"/>
    <property type="molecule type" value="mRNA"/>
</dbReference>
<dbReference type="EMBL" id="EU826609">
    <property type="protein sequence ID" value="ACF47645.1"/>
    <property type="molecule type" value="mRNA"/>
</dbReference>
<dbReference type="EMBL" id="EU826610">
    <property type="protein sequence ID" value="ACF47646.1"/>
    <property type="molecule type" value="mRNA"/>
</dbReference>
<dbReference type="EMBL" id="BC004264">
    <property type="protein sequence ID" value="AAH04264.1"/>
    <property type="molecule type" value="mRNA"/>
</dbReference>
<dbReference type="EMBL" id="BC052804">
    <property type="protein sequence ID" value="AAH52804.1"/>
    <property type="molecule type" value="mRNA"/>
</dbReference>
<dbReference type="CCDS" id="CCDS5706.1">
    <molecule id="P54760-1"/>
</dbReference>
<dbReference type="PIR" id="A54092">
    <property type="entry name" value="A54092"/>
</dbReference>
<dbReference type="RefSeq" id="NP_004435.3">
    <molecule id="P54760-1"/>
    <property type="nucleotide sequence ID" value="NM_004444.4"/>
</dbReference>
<dbReference type="PDB" id="2BBA">
    <property type="method" value="X-ray"/>
    <property type="resolution" value="1.65 A"/>
    <property type="chains" value="A=17-196"/>
</dbReference>
<dbReference type="PDB" id="2E7H">
    <property type="method" value="NMR"/>
    <property type="chains" value="A=434-529"/>
</dbReference>
<dbReference type="PDB" id="2HLE">
    <property type="method" value="X-ray"/>
    <property type="resolution" value="2.05 A"/>
    <property type="chains" value="A=17-196"/>
</dbReference>
<dbReference type="PDB" id="2QKQ">
    <property type="method" value="X-ray"/>
    <property type="resolution" value="2.10 A"/>
    <property type="chains" value="A/B=896-977"/>
</dbReference>
<dbReference type="PDB" id="2VWU">
    <property type="method" value="X-ray"/>
    <property type="resolution" value="2.00 A"/>
    <property type="chains" value="A=598-899"/>
</dbReference>
<dbReference type="PDB" id="2VWV">
    <property type="method" value="X-ray"/>
    <property type="resolution" value="1.90 A"/>
    <property type="chains" value="A=598-899"/>
</dbReference>
<dbReference type="PDB" id="2VWW">
    <property type="method" value="X-ray"/>
    <property type="resolution" value="1.90 A"/>
    <property type="chains" value="A=598-899"/>
</dbReference>
<dbReference type="PDB" id="2VWX">
    <property type="method" value="X-ray"/>
    <property type="resolution" value="1.65 A"/>
    <property type="chains" value="A=598-899"/>
</dbReference>
<dbReference type="PDB" id="2VWY">
    <property type="method" value="X-ray"/>
    <property type="resolution" value="1.65 A"/>
    <property type="chains" value="A=598-899"/>
</dbReference>
<dbReference type="PDB" id="2VWZ">
    <property type="method" value="X-ray"/>
    <property type="resolution" value="1.65 A"/>
    <property type="chains" value="A=598-899"/>
</dbReference>
<dbReference type="PDB" id="2VX0">
    <property type="method" value="X-ray"/>
    <property type="resolution" value="2.10 A"/>
    <property type="chains" value="A=598-899"/>
</dbReference>
<dbReference type="PDB" id="2VX1">
    <property type="method" value="X-ray"/>
    <property type="resolution" value="1.65 A"/>
    <property type="chains" value="A=598-899"/>
</dbReference>
<dbReference type="PDB" id="2X9F">
    <property type="method" value="X-ray"/>
    <property type="resolution" value="1.75 A"/>
    <property type="chains" value="A=598-899"/>
</dbReference>
<dbReference type="PDB" id="2XVD">
    <property type="method" value="X-ray"/>
    <property type="resolution" value="1.70 A"/>
    <property type="chains" value="A=598-899"/>
</dbReference>
<dbReference type="PDB" id="2YN8">
    <property type="method" value="X-ray"/>
    <property type="resolution" value="2.11 A"/>
    <property type="chains" value="A/B=598-892"/>
</dbReference>
<dbReference type="PDB" id="3ZEW">
    <property type="method" value="X-ray"/>
    <property type="resolution" value="2.50 A"/>
    <property type="chains" value="A/B=598-892"/>
</dbReference>
<dbReference type="PDB" id="4AW5">
    <property type="method" value="X-ray"/>
    <property type="resolution" value="2.33 A"/>
    <property type="chains" value="A=605-890"/>
</dbReference>
<dbReference type="PDB" id="4BB4">
    <property type="method" value="X-ray"/>
    <property type="resolution" value="1.65 A"/>
    <property type="chains" value="A=598-899"/>
</dbReference>
<dbReference type="PDB" id="6FNI">
    <property type="method" value="X-ray"/>
    <property type="resolution" value="1.47 A"/>
    <property type="chains" value="A=598-892"/>
</dbReference>
<dbReference type="PDB" id="6FNJ">
    <property type="method" value="X-ray"/>
    <property type="resolution" value="1.24 A"/>
    <property type="chains" value="A/B=598-892"/>
</dbReference>
<dbReference type="PDB" id="6FNK">
    <property type="method" value="X-ray"/>
    <property type="resolution" value="1.05 A"/>
    <property type="chains" value="A=598-892"/>
</dbReference>
<dbReference type="PDB" id="6FNL">
    <property type="method" value="X-ray"/>
    <property type="resolution" value="1.27 A"/>
    <property type="chains" value="A=598-892"/>
</dbReference>
<dbReference type="PDB" id="6FNM">
    <property type="method" value="X-ray"/>
    <property type="resolution" value="1.16 A"/>
    <property type="chains" value="A=598-892"/>
</dbReference>
<dbReference type="PDBsum" id="2BBA"/>
<dbReference type="PDBsum" id="2E7H"/>
<dbReference type="PDBsum" id="2HLE"/>
<dbReference type="PDBsum" id="2QKQ"/>
<dbReference type="PDBsum" id="2VWU"/>
<dbReference type="PDBsum" id="2VWV"/>
<dbReference type="PDBsum" id="2VWW"/>
<dbReference type="PDBsum" id="2VWX"/>
<dbReference type="PDBsum" id="2VWY"/>
<dbReference type="PDBsum" id="2VWZ"/>
<dbReference type="PDBsum" id="2VX0"/>
<dbReference type="PDBsum" id="2VX1"/>
<dbReference type="PDBsum" id="2X9F"/>
<dbReference type="PDBsum" id="2XVD"/>
<dbReference type="PDBsum" id="2YN8"/>
<dbReference type="PDBsum" id="3ZEW"/>
<dbReference type="PDBsum" id="4AW5"/>
<dbReference type="PDBsum" id="4BB4"/>
<dbReference type="PDBsum" id="6FNI"/>
<dbReference type="PDBsum" id="6FNJ"/>
<dbReference type="PDBsum" id="6FNK"/>
<dbReference type="PDBsum" id="6FNL"/>
<dbReference type="PDBsum" id="6FNM"/>
<dbReference type="BMRB" id="P54760"/>
<dbReference type="SASBDB" id="P54760"/>
<dbReference type="SMR" id="P54760"/>
<dbReference type="BioGRID" id="108364">
    <property type="interactions" value="147"/>
</dbReference>
<dbReference type="FunCoup" id="P54760">
    <property type="interactions" value="1222"/>
</dbReference>
<dbReference type="IntAct" id="P54760">
    <property type="interactions" value="94"/>
</dbReference>
<dbReference type="MINT" id="P54760"/>
<dbReference type="STRING" id="9606.ENSP00000350896"/>
<dbReference type="BindingDB" id="P54760"/>
<dbReference type="ChEMBL" id="CHEMBL5147"/>
<dbReference type="DrugBank" id="DB07256">
    <property type="generic name" value="3-({4-[(5-CHLORO-1,3-BENZODIOXOL-4-YL)AMINO]PYRIMIDIN-2-YL}AMINO)BENZAMIDE"/>
</dbReference>
<dbReference type="DrugBank" id="DB07252">
    <property type="generic name" value="3-({4-[(5-chloro-1,3-benzodioxol-4-yl)amino]pyrimidin-2-yl}amino)benzenesulfonamide"/>
</dbReference>
<dbReference type="DrugBank" id="DB01254">
    <property type="generic name" value="Dasatinib"/>
</dbReference>
<dbReference type="DrugBank" id="DB12010">
    <property type="generic name" value="Fostamatinib"/>
</dbReference>
<dbReference type="DrugBank" id="DB07251">
    <property type="generic name" value="N'-(3-CHLORO-4-METHOXY-PHENYL)-N-(3,4,5-TRIMETHOXYPHENYL)-1,3,5-TRIAZINE-2,4-DIAMINE"/>
</dbReference>
<dbReference type="DrugBank" id="DB07250">
    <property type="generic name" value="N'-(5-CHLORO-1,3-BENZODIOXOL-4-YL)-N-(3,4,5- TRIMETHOXYPHENYL)PYRIMIDINE-2,4-DIAMINE"/>
</dbReference>
<dbReference type="DrugBank" id="DB07253">
    <property type="generic name" value="N'-(5-chloro-1,3-benzodioxol-4-yl)-N-(3-methylsulfonylphenyl)pyrimidine-2,4-diamine"/>
</dbReference>
<dbReference type="DrugBank" id="DB07255">
    <property type="generic name" value="N'-(5-CHLORO-1,3-BENZODIOXOL-4-YL)-N-(3-MORPHOLIN-4-YLPHENYL)PYRIMIDINE-2,4-DIAMINE"/>
</dbReference>
<dbReference type="DrugBank" id="DB07249">
    <property type="generic name" value="N-(5-chloro-1,3-benzodioxol-4-yl)-6-methoxy-7-(3-piperidin-1-ylpropoxy)quinazolin-4-amine"/>
</dbReference>
<dbReference type="DrugBank" id="DB07254">
    <property type="generic name" value="N-[3-[[4-[(5-CHLORO-1,3-BENZODIOXOL-4-YL)AMINO]PYRIMIDIN-2-YL]AMINO]PHENYL]METHANESULFONAMIDE"/>
</dbReference>
<dbReference type="DrugBank" id="DB11973">
    <property type="generic name" value="Tesevatinib"/>
</dbReference>
<dbReference type="DrugCentral" id="P54760"/>
<dbReference type="GuidetoPHARMACOLOGY" id="1833"/>
<dbReference type="TCDB" id="8.A.23.1.15">
    <property type="family name" value="the basigin (basigin) family"/>
</dbReference>
<dbReference type="GlyConnect" id="1214">
    <property type="glycosylation" value="3 N-Linked glycans (1 site)"/>
</dbReference>
<dbReference type="GlyCosmos" id="P54760">
    <property type="glycosylation" value="3 sites, 3 glycans"/>
</dbReference>
<dbReference type="GlyGen" id="P54760">
    <property type="glycosylation" value="4 sites, 10 N-linked glycans (3 sites)"/>
</dbReference>
<dbReference type="iPTMnet" id="P54760"/>
<dbReference type="PhosphoSitePlus" id="P54760"/>
<dbReference type="SwissPalm" id="P54760"/>
<dbReference type="BioMuta" id="EPHB4"/>
<dbReference type="DMDM" id="19860819"/>
<dbReference type="CPTAC" id="CPTAC-2788"/>
<dbReference type="CPTAC" id="CPTAC-2841"/>
<dbReference type="CPTAC" id="CPTAC-2919"/>
<dbReference type="jPOST" id="P54760"/>
<dbReference type="MassIVE" id="P54760"/>
<dbReference type="PaxDb" id="9606-ENSP00000350896"/>
<dbReference type="PeptideAtlas" id="P54760"/>
<dbReference type="ProteomicsDB" id="56715">
    <molecule id="P54760-1"/>
</dbReference>
<dbReference type="Pumba" id="P54760"/>
<dbReference type="Antibodypedia" id="4623">
    <property type="antibodies" value="751 antibodies from 42 providers"/>
</dbReference>
<dbReference type="CPTC" id="P54760">
    <property type="antibodies" value="2 antibodies"/>
</dbReference>
<dbReference type="DNASU" id="2050"/>
<dbReference type="Ensembl" id="ENST00000358173.8">
    <molecule id="P54760-1"/>
    <property type="protein sequence ID" value="ENSP00000350896.3"/>
    <property type="gene ID" value="ENSG00000196411.10"/>
</dbReference>
<dbReference type="Ensembl" id="ENST00000616502.4">
    <molecule id="P54760-3"/>
    <property type="protein sequence ID" value="ENSP00000482702.1"/>
    <property type="gene ID" value="ENSG00000196411.10"/>
</dbReference>
<dbReference type="GeneID" id="2050"/>
<dbReference type="KEGG" id="hsa:2050"/>
<dbReference type="MANE-Select" id="ENST00000358173.8">
    <property type="protein sequence ID" value="ENSP00000350896.3"/>
    <property type="RefSeq nucleotide sequence ID" value="NM_004444.5"/>
    <property type="RefSeq protein sequence ID" value="NP_004435.3"/>
</dbReference>
<dbReference type="UCSC" id="uc011kkg.2">
    <molecule id="P54760-1"/>
    <property type="organism name" value="human"/>
</dbReference>
<dbReference type="AGR" id="HGNC:3395"/>
<dbReference type="CTD" id="2050"/>
<dbReference type="DisGeNET" id="2050"/>
<dbReference type="GeneCards" id="EPHB4"/>
<dbReference type="GeneReviews" id="EPHB4"/>
<dbReference type="HGNC" id="HGNC:3395">
    <property type="gene designation" value="EPHB4"/>
</dbReference>
<dbReference type="HPA" id="ENSG00000196411">
    <property type="expression patterns" value="Low tissue specificity"/>
</dbReference>
<dbReference type="MalaCards" id="EPHB4"/>
<dbReference type="MIM" id="600011">
    <property type="type" value="gene"/>
</dbReference>
<dbReference type="MIM" id="617300">
    <property type="type" value="phenotype"/>
</dbReference>
<dbReference type="MIM" id="618196">
    <property type="type" value="phenotype"/>
</dbReference>
<dbReference type="neXtProt" id="NX_P54760"/>
<dbReference type="OpenTargets" id="ENSG00000196411"/>
<dbReference type="Orphanet" id="693912">
    <property type="disease" value="EPHB4-related capillary malformation-arteriovenous malformation"/>
</dbReference>
<dbReference type="Orphanet" id="568065">
    <property type="disease" value="EPHB4-related lymphatic-related hydrops fetalis"/>
</dbReference>
<dbReference type="Orphanet" id="90186">
    <property type="disease" value="Meige disease"/>
</dbReference>
<dbReference type="Orphanet" id="1053">
    <property type="disease" value="Vein of Galen aneurysmal malformation"/>
</dbReference>
<dbReference type="PharmGKB" id="PA27827"/>
<dbReference type="VEuPathDB" id="HostDB:ENSG00000196411"/>
<dbReference type="eggNOG" id="KOG0196">
    <property type="taxonomic scope" value="Eukaryota"/>
</dbReference>
<dbReference type="GeneTree" id="ENSGT00940000160057"/>
<dbReference type="HOGENOM" id="CLU_000288_141_3_1"/>
<dbReference type="InParanoid" id="P54760"/>
<dbReference type="OMA" id="STKCRAC"/>
<dbReference type="OrthoDB" id="4062651at2759"/>
<dbReference type="PAN-GO" id="P54760">
    <property type="GO annotations" value="9 GO annotations based on evolutionary models"/>
</dbReference>
<dbReference type="PhylomeDB" id="P54760"/>
<dbReference type="TreeFam" id="TF315608"/>
<dbReference type="BRENDA" id="2.7.10.1">
    <property type="organism ID" value="2681"/>
</dbReference>
<dbReference type="PathwayCommons" id="P54760"/>
<dbReference type="Reactome" id="R-HSA-2682334">
    <property type="pathway name" value="EPH-Ephrin signaling"/>
</dbReference>
<dbReference type="Reactome" id="R-HSA-3928662">
    <property type="pathway name" value="EPHB-mediated forward signaling"/>
</dbReference>
<dbReference type="Reactome" id="R-HSA-3928664">
    <property type="pathway name" value="Ephrin signaling"/>
</dbReference>
<dbReference type="Reactome" id="R-HSA-3928665">
    <property type="pathway name" value="EPH-ephrin mediated repulsion of cells"/>
</dbReference>
<dbReference type="SignaLink" id="P54760"/>
<dbReference type="SIGNOR" id="P54760"/>
<dbReference type="BioGRID-ORCS" id="2050">
    <property type="hits" value="13 hits in 1190 CRISPR screens"/>
</dbReference>
<dbReference type="ChiTaRS" id="EPHB4">
    <property type="organism name" value="human"/>
</dbReference>
<dbReference type="EvolutionaryTrace" id="P54760"/>
<dbReference type="GeneWiki" id="EPH_receptor_B4"/>
<dbReference type="GenomeRNAi" id="2050"/>
<dbReference type="Pharos" id="P54760">
    <property type="development level" value="Tchem"/>
</dbReference>
<dbReference type="PRO" id="PR:P54760"/>
<dbReference type="Proteomes" id="UP000005640">
    <property type="component" value="Chromosome 7"/>
</dbReference>
<dbReference type="RNAct" id="P54760">
    <property type="molecule type" value="protein"/>
</dbReference>
<dbReference type="Bgee" id="ENSG00000196411">
    <property type="expression patterns" value="Expressed in olfactory bulb and 209 other cell types or tissues"/>
</dbReference>
<dbReference type="ExpressionAtlas" id="P54760">
    <property type="expression patterns" value="baseline and differential"/>
</dbReference>
<dbReference type="GO" id="GO:0005829">
    <property type="term" value="C:cytosol"/>
    <property type="evidence" value="ECO:0000304"/>
    <property type="project" value="Reactome"/>
</dbReference>
<dbReference type="GO" id="GO:0070062">
    <property type="term" value="C:extracellular exosome"/>
    <property type="evidence" value="ECO:0007005"/>
    <property type="project" value="UniProtKB"/>
</dbReference>
<dbReference type="GO" id="GO:0005576">
    <property type="term" value="C:extracellular region"/>
    <property type="evidence" value="ECO:0000304"/>
    <property type="project" value="Reactome"/>
</dbReference>
<dbReference type="GO" id="GO:0005886">
    <property type="term" value="C:plasma membrane"/>
    <property type="evidence" value="ECO:0000314"/>
    <property type="project" value="UniProtKB"/>
</dbReference>
<dbReference type="GO" id="GO:0043235">
    <property type="term" value="C:receptor complex"/>
    <property type="evidence" value="ECO:0000318"/>
    <property type="project" value="GO_Central"/>
</dbReference>
<dbReference type="GO" id="GO:0005524">
    <property type="term" value="F:ATP binding"/>
    <property type="evidence" value="ECO:0007669"/>
    <property type="project" value="UniProtKB-KW"/>
</dbReference>
<dbReference type="GO" id="GO:0005003">
    <property type="term" value="F:ephrin receptor activity"/>
    <property type="evidence" value="ECO:0000314"/>
    <property type="project" value="UniProtKB"/>
</dbReference>
<dbReference type="GO" id="GO:0004714">
    <property type="term" value="F:transmembrane receptor protein tyrosine kinase activity"/>
    <property type="evidence" value="ECO:0000314"/>
    <property type="project" value="UniProtKB"/>
</dbReference>
<dbReference type="GO" id="GO:0001525">
    <property type="term" value="P:angiogenesis"/>
    <property type="evidence" value="ECO:0000250"/>
    <property type="project" value="UniProtKB"/>
</dbReference>
<dbReference type="GO" id="GO:0007155">
    <property type="term" value="P:cell adhesion"/>
    <property type="evidence" value="ECO:0000314"/>
    <property type="project" value="UniProtKB"/>
</dbReference>
<dbReference type="GO" id="GO:0002042">
    <property type="term" value="P:cell migration involved in sprouting angiogenesis"/>
    <property type="evidence" value="ECO:0000314"/>
    <property type="project" value="UniProtKB"/>
</dbReference>
<dbReference type="GO" id="GO:0048013">
    <property type="term" value="P:ephrin receptor signaling pathway"/>
    <property type="evidence" value="ECO:0000314"/>
    <property type="project" value="UniProtKB"/>
</dbReference>
<dbReference type="GO" id="GO:0003007">
    <property type="term" value="P:heart morphogenesis"/>
    <property type="evidence" value="ECO:0000250"/>
    <property type="project" value="UniProtKB"/>
</dbReference>
<dbReference type="GO" id="GO:0046777">
    <property type="term" value="P:protein autophosphorylation"/>
    <property type="evidence" value="ECO:0000314"/>
    <property type="project" value="UniProtKB"/>
</dbReference>
<dbReference type="CDD" id="cd10474">
    <property type="entry name" value="EphR_LBD_B4"/>
    <property type="match status" value="1"/>
</dbReference>
<dbReference type="CDD" id="cd00063">
    <property type="entry name" value="FN3"/>
    <property type="match status" value="2"/>
</dbReference>
<dbReference type="CDD" id="cd05065">
    <property type="entry name" value="PTKc_EphR_B"/>
    <property type="match status" value="1"/>
</dbReference>
<dbReference type="CDD" id="cd09554">
    <property type="entry name" value="SAM_EPH-B4"/>
    <property type="match status" value="1"/>
</dbReference>
<dbReference type="FunFam" id="1.10.150.50:FF:000001">
    <property type="entry name" value="Ephrin type-A receptor 5"/>
    <property type="match status" value="1"/>
</dbReference>
<dbReference type="FunFam" id="2.10.50.10:FF:000001">
    <property type="entry name" value="Ephrin type-A receptor 5"/>
    <property type="match status" value="1"/>
</dbReference>
<dbReference type="FunFam" id="3.30.200.20:FF:000001">
    <property type="entry name" value="Ephrin type-A receptor 5"/>
    <property type="match status" value="1"/>
</dbReference>
<dbReference type="FunFam" id="2.60.40.10:FF:000059">
    <property type="entry name" value="Ephrin type-A receptor 6"/>
    <property type="match status" value="1"/>
</dbReference>
<dbReference type="FunFam" id="1.10.510.10:FF:000015">
    <property type="entry name" value="Ephrin type-B receptor 2"/>
    <property type="match status" value="1"/>
</dbReference>
<dbReference type="FunFam" id="2.60.120.260:FF:000071">
    <property type="entry name" value="Ephrin type-B receptor 4"/>
    <property type="match status" value="1"/>
</dbReference>
<dbReference type="FunFam" id="2.60.40.10:FF:000787">
    <property type="entry name" value="ephrin type-B receptor 4"/>
    <property type="match status" value="1"/>
</dbReference>
<dbReference type="FunFam" id="2.60.40.1770:FF:000003">
    <property type="entry name" value="ephrin type-B receptor 4"/>
    <property type="match status" value="1"/>
</dbReference>
<dbReference type="Gene3D" id="2.60.40.1770">
    <property type="entry name" value="ephrin a2 ectodomain"/>
    <property type="match status" value="1"/>
</dbReference>
<dbReference type="Gene3D" id="2.60.120.260">
    <property type="entry name" value="Galactose-binding domain-like"/>
    <property type="match status" value="1"/>
</dbReference>
<dbReference type="Gene3D" id="2.60.40.10">
    <property type="entry name" value="Immunoglobulins"/>
    <property type="match status" value="2"/>
</dbReference>
<dbReference type="Gene3D" id="3.30.200.20">
    <property type="entry name" value="Phosphorylase Kinase, domain 1"/>
    <property type="match status" value="1"/>
</dbReference>
<dbReference type="Gene3D" id="1.10.150.50">
    <property type="entry name" value="Transcription Factor, Ets-1"/>
    <property type="match status" value="1"/>
</dbReference>
<dbReference type="Gene3D" id="1.10.510.10">
    <property type="entry name" value="Transferase(Phosphotransferase) domain 1"/>
    <property type="match status" value="1"/>
</dbReference>
<dbReference type="Gene3D" id="2.10.50.10">
    <property type="entry name" value="Tumor Necrosis Factor Receptor, subunit A, domain 2"/>
    <property type="match status" value="1"/>
</dbReference>
<dbReference type="InterPro" id="IPR037636">
    <property type="entry name" value="EPH-B4_SAM"/>
</dbReference>
<dbReference type="InterPro" id="IPR027936">
    <property type="entry name" value="Eph_TM"/>
</dbReference>
<dbReference type="InterPro" id="IPR034290">
    <property type="entry name" value="EphB4_rcpt_lig-bd"/>
</dbReference>
<dbReference type="InterPro" id="IPR001090">
    <property type="entry name" value="Ephrin_rcpt_lig-bd_dom"/>
</dbReference>
<dbReference type="InterPro" id="IPR050449">
    <property type="entry name" value="Ephrin_rcpt_TKs"/>
</dbReference>
<dbReference type="InterPro" id="IPR003961">
    <property type="entry name" value="FN3_dom"/>
</dbReference>
<dbReference type="InterPro" id="IPR036116">
    <property type="entry name" value="FN3_sf"/>
</dbReference>
<dbReference type="InterPro" id="IPR008979">
    <property type="entry name" value="Galactose-bd-like_sf"/>
</dbReference>
<dbReference type="InterPro" id="IPR009030">
    <property type="entry name" value="Growth_fac_rcpt_cys_sf"/>
</dbReference>
<dbReference type="InterPro" id="IPR013783">
    <property type="entry name" value="Ig-like_fold"/>
</dbReference>
<dbReference type="InterPro" id="IPR011009">
    <property type="entry name" value="Kinase-like_dom_sf"/>
</dbReference>
<dbReference type="InterPro" id="IPR000719">
    <property type="entry name" value="Prot_kinase_dom"/>
</dbReference>
<dbReference type="InterPro" id="IPR017441">
    <property type="entry name" value="Protein_kinase_ATP_BS"/>
</dbReference>
<dbReference type="InterPro" id="IPR001660">
    <property type="entry name" value="SAM"/>
</dbReference>
<dbReference type="InterPro" id="IPR013761">
    <property type="entry name" value="SAM/pointed_sf"/>
</dbReference>
<dbReference type="InterPro" id="IPR001245">
    <property type="entry name" value="Ser-Thr/Tyr_kinase_cat_dom"/>
</dbReference>
<dbReference type="InterPro" id="IPR011641">
    <property type="entry name" value="Tyr-kin_ephrin_A/B_rcpt-like"/>
</dbReference>
<dbReference type="InterPro" id="IPR008266">
    <property type="entry name" value="Tyr_kinase_AS"/>
</dbReference>
<dbReference type="InterPro" id="IPR020635">
    <property type="entry name" value="Tyr_kinase_cat_dom"/>
</dbReference>
<dbReference type="InterPro" id="IPR016257">
    <property type="entry name" value="Tyr_kinase_ephrin_rcpt"/>
</dbReference>
<dbReference type="InterPro" id="IPR001426">
    <property type="entry name" value="Tyr_kinase_rcpt_V_CS"/>
</dbReference>
<dbReference type="PANTHER" id="PTHR46877">
    <property type="entry name" value="EPH RECEPTOR A5"/>
    <property type="match status" value="1"/>
</dbReference>
<dbReference type="PANTHER" id="PTHR46877:SF19">
    <property type="entry name" value="RECEPTOR PROTEIN-TYROSINE KINASE"/>
    <property type="match status" value="1"/>
</dbReference>
<dbReference type="Pfam" id="PF14575">
    <property type="entry name" value="EphA2_TM"/>
    <property type="match status" value="1"/>
</dbReference>
<dbReference type="Pfam" id="PF01404">
    <property type="entry name" value="Ephrin_lbd"/>
    <property type="match status" value="1"/>
</dbReference>
<dbReference type="Pfam" id="PF07699">
    <property type="entry name" value="Ephrin_rec_like"/>
    <property type="match status" value="1"/>
</dbReference>
<dbReference type="Pfam" id="PF00041">
    <property type="entry name" value="fn3"/>
    <property type="match status" value="2"/>
</dbReference>
<dbReference type="Pfam" id="PF07714">
    <property type="entry name" value="PK_Tyr_Ser-Thr"/>
    <property type="match status" value="1"/>
</dbReference>
<dbReference type="Pfam" id="PF00536">
    <property type="entry name" value="SAM_1"/>
    <property type="match status" value="1"/>
</dbReference>
<dbReference type="PIRSF" id="PIRSF000666">
    <property type="entry name" value="TyrPK_ephrin_receptor"/>
    <property type="match status" value="1"/>
</dbReference>
<dbReference type="PRINTS" id="PR00109">
    <property type="entry name" value="TYRKINASE"/>
</dbReference>
<dbReference type="SMART" id="SM00615">
    <property type="entry name" value="EPH_lbd"/>
    <property type="match status" value="1"/>
</dbReference>
<dbReference type="SMART" id="SM01411">
    <property type="entry name" value="Ephrin_rec_like"/>
    <property type="match status" value="1"/>
</dbReference>
<dbReference type="SMART" id="SM00060">
    <property type="entry name" value="FN3"/>
    <property type="match status" value="2"/>
</dbReference>
<dbReference type="SMART" id="SM00454">
    <property type="entry name" value="SAM"/>
    <property type="match status" value="1"/>
</dbReference>
<dbReference type="SMART" id="SM00219">
    <property type="entry name" value="TyrKc"/>
    <property type="match status" value="1"/>
</dbReference>
<dbReference type="SUPFAM" id="SSF49265">
    <property type="entry name" value="Fibronectin type III"/>
    <property type="match status" value="1"/>
</dbReference>
<dbReference type="SUPFAM" id="SSF49785">
    <property type="entry name" value="Galactose-binding domain-like"/>
    <property type="match status" value="1"/>
</dbReference>
<dbReference type="SUPFAM" id="SSF57184">
    <property type="entry name" value="Growth factor receptor domain"/>
    <property type="match status" value="1"/>
</dbReference>
<dbReference type="SUPFAM" id="SSF56112">
    <property type="entry name" value="Protein kinase-like (PK-like)"/>
    <property type="match status" value="1"/>
</dbReference>
<dbReference type="SUPFAM" id="SSF47769">
    <property type="entry name" value="SAM/Pointed domain"/>
    <property type="match status" value="1"/>
</dbReference>
<dbReference type="PROSITE" id="PS01186">
    <property type="entry name" value="EGF_2"/>
    <property type="match status" value="1"/>
</dbReference>
<dbReference type="PROSITE" id="PS51550">
    <property type="entry name" value="EPH_LBD"/>
    <property type="match status" value="1"/>
</dbReference>
<dbReference type="PROSITE" id="PS50853">
    <property type="entry name" value="FN3"/>
    <property type="match status" value="2"/>
</dbReference>
<dbReference type="PROSITE" id="PS00107">
    <property type="entry name" value="PROTEIN_KINASE_ATP"/>
    <property type="match status" value="1"/>
</dbReference>
<dbReference type="PROSITE" id="PS50011">
    <property type="entry name" value="PROTEIN_KINASE_DOM"/>
    <property type="match status" value="1"/>
</dbReference>
<dbReference type="PROSITE" id="PS00109">
    <property type="entry name" value="PROTEIN_KINASE_TYR"/>
    <property type="match status" value="1"/>
</dbReference>
<dbReference type="PROSITE" id="PS00790">
    <property type="entry name" value="RECEPTOR_TYR_KIN_V_1"/>
    <property type="match status" value="1"/>
</dbReference>
<dbReference type="PROSITE" id="PS00791">
    <property type="entry name" value="RECEPTOR_TYR_KIN_V_2"/>
    <property type="match status" value="1"/>
</dbReference>
<dbReference type="PROSITE" id="PS50105">
    <property type="entry name" value="SAM_DOMAIN"/>
    <property type="match status" value="1"/>
</dbReference>
<keyword id="KW-0002">3D-structure</keyword>
<keyword id="KW-0025">Alternative splicing</keyword>
<keyword id="KW-0037">Angiogenesis</keyword>
<keyword id="KW-0067">ATP-binding</keyword>
<keyword id="KW-1003">Cell membrane</keyword>
<keyword id="KW-0217">Developmental protein</keyword>
<keyword id="KW-0225">Disease variant</keyword>
<keyword id="KW-1015">Disulfide bond</keyword>
<keyword id="KW-0325">Glycoprotein</keyword>
<keyword id="KW-0418">Kinase</keyword>
<keyword id="KW-0472">Membrane</keyword>
<keyword id="KW-0547">Nucleotide-binding</keyword>
<keyword id="KW-0597">Phosphoprotein</keyword>
<keyword id="KW-1267">Proteomics identification</keyword>
<keyword id="KW-0675">Receptor</keyword>
<keyword id="KW-1185">Reference proteome</keyword>
<keyword id="KW-0677">Repeat</keyword>
<keyword id="KW-0732">Signal</keyword>
<keyword id="KW-0808">Transferase</keyword>
<keyword id="KW-0812">Transmembrane</keyword>
<keyword id="KW-1133">Transmembrane helix</keyword>
<keyword id="KW-0829">Tyrosine-protein kinase</keyword>
<protein>
    <recommendedName>
        <fullName>Ephrin type-B receptor 4</fullName>
        <ecNumber>2.7.10.1</ecNumber>
    </recommendedName>
    <alternativeName>
        <fullName>Hepatoma transmembrane kinase</fullName>
    </alternativeName>
    <alternativeName>
        <fullName>Tyrosine-protein kinase TYRO11</fullName>
    </alternativeName>
</protein>
<name>EPHB4_HUMAN</name>
<feature type="signal peptide" evidence="2">
    <location>
        <begin position="1"/>
        <end position="15"/>
    </location>
</feature>
<feature type="chain" id="PRO_0000016834" description="Ephrin type-B receptor 4">
    <location>
        <begin position="16"/>
        <end position="987"/>
    </location>
</feature>
<feature type="topological domain" description="Extracellular" evidence="2">
    <location>
        <begin position="16"/>
        <end position="539"/>
    </location>
</feature>
<feature type="transmembrane region" description="Helical" evidence="2">
    <location>
        <begin position="540"/>
        <end position="560"/>
    </location>
</feature>
<feature type="topological domain" description="Cytoplasmic" evidence="2">
    <location>
        <begin position="561"/>
        <end position="987"/>
    </location>
</feature>
<feature type="domain" description="Eph LBD" evidence="6">
    <location>
        <begin position="17"/>
        <end position="202"/>
    </location>
</feature>
<feature type="domain" description="Fibronectin type-III 1" evidence="5">
    <location>
        <begin position="323"/>
        <end position="432"/>
    </location>
</feature>
<feature type="domain" description="Fibronectin type-III 2" evidence="5">
    <location>
        <begin position="436"/>
        <end position="529"/>
    </location>
</feature>
<feature type="domain" description="Protein kinase" evidence="3">
    <location>
        <begin position="615"/>
        <end position="899"/>
    </location>
</feature>
<feature type="domain" description="SAM" evidence="4">
    <location>
        <begin position="907"/>
        <end position="971"/>
    </location>
</feature>
<feature type="region of interest" description="Disordered" evidence="8">
    <location>
        <begin position="965"/>
        <end position="987"/>
    </location>
</feature>
<feature type="short sequence motif" description="PDZ-binding" evidence="2">
    <location>
        <begin position="985"/>
        <end position="987"/>
    </location>
</feature>
<feature type="compositionally biased region" description="Gly residues" evidence="8">
    <location>
        <begin position="976"/>
        <end position="987"/>
    </location>
</feature>
<feature type="active site" description="Proton acceptor" evidence="3 7">
    <location>
        <position position="740"/>
    </location>
</feature>
<feature type="binding site" evidence="3">
    <location>
        <begin position="621"/>
        <end position="629"/>
    </location>
    <ligand>
        <name>ATP</name>
        <dbReference type="ChEBI" id="CHEBI:30616"/>
    </ligand>
</feature>
<feature type="binding site" evidence="3">
    <location>
        <position position="647"/>
    </location>
    <ligand>
        <name>ATP</name>
        <dbReference type="ChEBI" id="CHEBI:30616"/>
    </ligand>
</feature>
<feature type="modified residue" description="Phosphoserine" evidence="25">
    <location>
        <position position="769"/>
    </location>
</feature>
<feature type="modified residue" description="Phosphoserine" evidence="25">
    <location>
        <position position="770"/>
    </location>
</feature>
<feature type="modified residue" description="Phosphoserine" evidence="23 24">
    <location>
        <position position="911"/>
    </location>
</feature>
<feature type="modified residue" description="Phosphoserine" evidence="26">
    <location>
        <position position="943"/>
    </location>
</feature>
<feature type="modified residue" description="Phosphothreonine" evidence="22 23 24 25">
    <location>
        <position position="976"/>
    </location>
</feature>
<feature type="modified residue" description="Phosphotyrosine" evidence="24">
    <location>
        <position position="987"/>
    </location>
</feature>
<feature type="glycosylation site" description="N-linked (GlcNAc...) asparagine" evidence="2">
    <location>
        <position position="203"/>
    </location>
</feature>
<feature type="glycosylation site" description="N-linked (GlcNAc...) asparagine" evidence="2">
    <location>
        <position position="335"/>
    </location>
</feature>
<feature type="glycosylation site" description="N-linked (GlcNAc...) asparagine" evidence="2">
    <location>
        <position position="426"/>
    </location>
</feature>
<feature type="disulfide bond">
    <location>
        <begin position="61"/>
        <end position="184"/>
    </location>
</feature>
<feature type="disulfide bond">
    <location>
        <begin position="97"/>
        <end position="107"/>
    </location>
</feature>
<feature type="splice variant" id="VSP_056020" description="In isoform 3." evidence="20">
    <original>ACAQGTFKPLSGEGSCQPCPANSHSNTIGSAVCQCRV</original>
    <variation>GRRGSQQRAVPEDVRKPGRAAGAEAGSQLPGAGTGAL</variation>
    <location>
        <begin position="270"/>
        <end position="306"/>
    </location>
</feature>
<feature type="splice variant" id="VSP_056021" description="In isoform 3." evidence="20">
    <location>
        <begin position="307"/>
        <end position="987"/>
    </location>
</feature>
<feature type="splice variant" id="VSP_056022" description="In isoform 4." evidence="20">
    <original>VTALNGVSS</original>
    <variation>YLLQCLTSG</variation>
    <location>
        <begin position="406"/>
        <end position="414"/>
    </location>
</feature>
<feature type="splice variant" id="VSP_056023" description="In isoform 4." evidence="20">
    <location>
        <begin position="415"/>
        <end position="987"/>
    </location>
</feature>
<feature type="splice variant" id="VSP_056024" description="In isoform 2." evidence="20">
    <original>VRARSEAGYG</original>
    <variation>RARAGGSSWP</variation>
    <location>
        <begin position="507"/>
        <end position="516"/>
    </location>
</feature>
<feature type="splice variant" id="VSP_056025" description="In isoform 2." evidence="20">
    <location>
        <begin position="517"/>
        <end position="987"/>
    </location>
</feature>
<feature type="sequence variant" id="VAR_081689" description="In CMAVM2; uncertain significance; dbSNP:rs1584667224." evidence="15">
    <original>E</original>
    <variation>K</variation>
    <location>
        <position position="59"/>
    </location>
</feature>
<feature type="sequence variant" id="VAR_042181" description="In dbSNP:rs34653459." evidence="13">
    <original>P</original>
    <variation>L</variation>
    <location>
        <position position="67"/>
    </location>
</feature>
<feature type="sequence variant" id="VAR_081690" description="In CMAVM2; uncertain significance; dbSNP:rs61735971." evidence="15">
    <original>R</original>
    <variation>P</variation>
    <location>
        <position position="74"/>
    </location>
</feature>
<feature type="sequence variant" id="VAR_081691" description="In CMAVM2; uncertain significance; dbSNP:rs1562974383." evidence="17">
    <original>C</original>
    <variation>R</variation>
    <location>
        <position position="107"/>
    </location>
</feature>
<feature type="sequence variant" id="VAR_042182" description="In dbSNP:rs55866373." evidence="13">
    <original>V</original>
    <variation>I</variation>
    <location>
        <position position="113"/>
    </location>
</feature>
<feature type="sequence variant" id="VAR_081692" description="In CMAVM2; uncertain significance." evidence="15">
    <location>
        <position position="115"/>
    </location>
</feature>
<feature type="sequence variant" id="VAR_081693" description="In CMAVM2." evidence="15">
    <location>
        <begin position="130"/>
        <end position="987"/>
    </location>
</feature>
<feature type="sequence variant" id="VAR_081694" description="In CMAVM2; uncertain significance." evidence="15">
    <original>VK</original>
    <variation>L</variation>
    <location>
        <begin position="161"/>
        <end position="162"/>
    </location>
</feature>
<feature type="sequence variant" id="VAR_071163" description="In dbSNP:rs17854760." evidence="10">
    <original>K</original>
    <variation>R</variation>
    <location>
        <position position="162"/>
    </location>
</feature>
<feature type="sequence variant" id="VAR_081695" description="In CMAVM2; uncertain significance; dbSNP:rs1584666053." evidence="15">
    <original>L</original>
    <variation>P</variation>
    <location>
        <position position="187"/>
    </location>
</feature>
<feature type="sequence variant" id="VAR_081696" description="In CMAVM2." evidence="15">
    <location>
        <begin position="244"/>
        <end position="987"/>
    </location>
</feature>
<feature type="sequence variant" id="VAR_081697" description="In CMAVM2; uncertain significance; dbSNP:rs201816920." evidence="15">
    <original>C</original>
    <variation>R</variation>
    <location>
        <position position="268"/>
    </location>
</feature>
<feature type="sequence variant" id="VAR_042183" description="In a metastatic melanoma sample; somatic mutation; dbSNP:rs267601191." evidence="13">
    <original>P</original>
    <variation>L</variation>
    <location>
        <position position="346"/>
    </location>
</feature>
<feature type="sequence variant" id="VAR_081698" description="In CMAVM2." evidence="15">
    <location>
        <begin position="352"/>
        <end position="987"/>
    </location>
</feature>
<feature type="sequence variant" id="VAR_042184" description="In dbSNP:rs55720981." evidence="13">
    <original>A</original>
    <variation>V</variation>
    <location>
        <position position="371"/>
    </location>
</feature>
<feature type="sequence variant" id="VAR_081699" description="In CMAVM2." evidence="15">
    <location>
        <begin position="375"/>
        <end position="987"/>
    </location>
</feature>
<feature type="sequence variant" id="VAR_081700" description="In CMAVM2." evidence="15">
    <location>
        <begin position="431"/>
        <end position="987"/>
    </location>
</feature>
<feature type="sequence variant" id="VAR_081701" description="In CMAVM2; uncertain significance; dbSNP:rs1584662591." evidence="15">
    <original>V</original>
    <variation>G</variation>
    <location>
        <position position="469"/>
    </location>
</feature>
<feature type="sequence variant" id="VAR_081702" description="Does not affect tyrosine phosphorylation; does not affect interaction with RASA1; dbSNP:rs146937374." evidence="18">
    <original>A</original>
    <variation>G</variation>
    <location>
        <position position="509"/>
    </location>
</feature>
<feature type="sequence variant" id="VAR_081703" description="In CMAVM2; uncertain significance; dbSNP:rs776305185." evidence="15">
    <original>G</original>
    <variation>R</variation>
    <location>
        <position position="516"/>
    </location>
</feature>
<feature type="sequence variant" id="VAR_081704" description="In CMAVM2." evidence="15">
    <location>
        <begin position="520"/>
        <end position="987"/>
    </location>
</feature>
<feature type="sequence variant" id="VAR_042185" description="In dbSNP:rs36050247." evidence="13">
    <original>D</original>
    <variation>E</variation>
    <location>
        <position position="576"/>
    </location>
</feature>
<feature type="sequence variant" id="VAR_081705" description="In CMAVM2." evidence="15">
    <location>
        <begin position="596"/>
        <end position="987"/>
    </location>
</feature>
<feature type="sequence variant" id="VAR_081706" description="In CMAVM2; highly decreased tyrosine phosphorylation; highly decreased interaction with RASA1; dbSNP:rs1584658113." evidence="18">
    <original>K</original>
    <variation>N</variation>
    <location>
        <position position="650"/>
    </location>
</feature>
<feature type="sequence variant" id="VAR_081707" description="In CMAVM2; uncertain significance; dbSNP:rs745584371." evidence="15">
    <original>R</original>
    <variation>W</variation>
    <location>
        <position position="656"/>
    </location>
</feature>
<feature type="sequence variant" id="VAR_081708" description="In CMAVM2; the mutant protein is not detected by Western blot; loss of localization to cell membrane; dbSNP:rs1562969219." evidence="15">
    <original>E</original>
    <variation>K</variation>
    <location>
        <position position="664"/>
    </location>
</feature>
<feature type="sequence variant" id="VAR_042186" description="In dbSNP:rs55692440." evidence="13">
    <original>R</original>
    <variation>H</variation>
    <location>
        <position position="678"/>
    </location>
</feature>
<feature type="sequence variant" id="VAR_081709" description="In CMAVM2; uncertain significance; dbSNP:rs1159930961." evidence="15">
    <original>A</original>
    <variation>T</variation>
    <location>
        <position position="725"/>
    </location>
</feature>
<feature type="sequence variant" id="VAR_081710" description="In CMAVM2." evidence="15">
    <location>
        <begin position="739"/>
        <end position="987"/>
    </location>
</feature>
<feature type="sequence variant" id="VAR_078063" description="In LMPHM7; loss of kinase activity; dbSNP:rs1057519263." evidence="14">
    <original>R</original>
    <variation>Q</variation>
    <location>
        <position position="739"/>
    </location>
</feature>
<feature type="sequence variant" id="VAR_081711" description="In CMAVM2; dbSNP:rs1584654433." evidence="15">
    <original>N</original>
    <variation>D</variation>
    <location>
        <position position="745"/>
    </location>
</feature>
<feature type="sequence variant" id="VAR_078064" description="In LMPHM7; loss of kinase activity; dbSNP:rs1057519264." evidence="14">
    <original>I</original>
    <variation>S</variation>
    <location>
        <position position="782"/>
    </location>
</feature>
<feature type="sequence variant" id="VAR_081712" description="In CMAVM2; uncertain significance; dbSNP:rs753075600." evidence="15">
    <original>P</original>
    <variation>R</variation>
    <location>
        <position position="789"/>
    </location>
</feature>
<feature type="sequence variant" id="VAR_081713" description="In CMAVM2; uncertain significance; dbSNP:rs1417508111." evidence="15">
    <original>P</original>
    <variation>S</variation>
    <location>
        <position position="789"/>
    </location>
</feature>
<feature type="sequence variant" id="VAR_081714" description="In CMAVM2; dbSNP:rs776410552." evidence="16">
    <original>D</original>
    <variation>G</variation>
    <location>
        <position position="802"/>
    </location>
</feature>
<feature type="sequence variant" id="VAR_081715" description="In CMAVM2." evidence="15">
    <location>
        <begin position="806"/>
        <end position="987"/>
    </location>
</feature>
<feature type="sequence variant" id="VAR_081716" description="In CMAVM2; uncertain significance; dbSNP:rs1330628156." evidence="15">
    <original>G</original>
    <variation>R</variation>
    <location>
        <position position="807"/>
    </location>
</feature>
<feature type="sequence variant" id="VAR_081717" description="In CMAVM2; uncertain significance; dbSNP:rs1584653650." evidence="15">
    <original>P</original>
    <variation>L</variation>
    <location>
        <position position="820"/>
    </location>
</feature>
<feature type="sequence variant" id="VAR_081718" description="In CMAVM2; uncertain significance; dbSNP:rs1584653653." evidence="15">
    <original>P</original>
    <variation>T</variation>
    <location>
        <position position="820"/>
    </location>
</feature>
<feature type="sequence variant" id="VAR_081719" description="In CMAVM2; the mutant protein is not detected by Western blot; loss of localization to cell membrane; dbSNP:rs764827256." evidence="15">
    <original>R</original>
    <variation>W</variation>
    <location>
        <position position="838"/>
    </location>
</feature>
<feature type="sequence variant" id="VAR_081720" description="In CMAVM2; the mutant protein is not detected by Western blot; loss of localization to cell membrane; dbSNP:rs1584653054." evidence="15">
    <original>C</original>
    <variation>R</variation>
    <location>
        <position position="845"/>
    </location>
</feature>
<feature type="sequence variant" id="VAR_081721" description="In CMAVM2; dbSNP:rs1584653005." evidence="15">
    <original>C</original>
    <variation>Y</variation>
    <location>
        <position position="856"/>
    </location>
</feature>
<feature type="sequence variant" id="VAR_081722" description="In CMAVM2; the mutant protein is not detected by Western blot; loss of localization to cell membrane; dbSNP:rs769965440." evidence="15">
    <original>R</original>
    <variation>W</variation>
    <location>
        <position position="864"/>
    </location>
</feature>
<feature type="sequence variant" id="VAR_081723" description="In CMAVM2; loss of tyrosine phosphorylation; loss of interaction with RASA1; dbSNP:rs1584652949." evidence="18">
    <original>F</original>
    <variation>L</variation>
    <location>
        <position position="867"/>
    </location>
</feature>
<feature type="sequence variant" id="VAR_081724" description="In CMAVM2; uncertain significance; dbSNP:rs1584652920." evidence="17">
    <original>V</original>
    <variation>E</variation>
    <location>
        <position position="870"/>
    </location>
</feature>
<feature type="sequence variant" id="VAR_081725" description="In CMAVM2; uncertain significance; dbSNP:rs1584652900." evidence="15">
    <original>L</original>
    <variation>P</variation>
    <location>
        <position position="874"/>
    </location>
</feature>
<feature type="sequence variant" id="VAR_042187" description="In dbSNP:rs34918225." evidence="13">
    <original>A</original>
    <variation>T</variation>
    <location>
        <position position="882"/>
    </location>
</feature>
<feature type="sequence variant" id="VAR_042188" description="In a gastric adenocarcinoma sample; somatic mutation; dbSNP:rs762016655." evidence="13">
    <original>R</original>
    <variation>W</variation>
    <location>
        <position position="889"/>
    </location>
</feature>
<feature type="sequence variant" id="VAR_042189" description="In dbSNP:rs35638378." evidence="13">
    <original>E</original>
    <variation>D</variation>
    <location>
        <position position="890"/>
    </location>
</feature>
<feature type="mutagenesis site" description="Reduces binding affinity for EFNB2." evidence="12">
    <original>L</original>
    <variation>R</variation>
    <location>
        <position position="95"/>
    </location>
</feature>
<feature type="sequence conflict" description="In Ref. 1; AAA20598." evidence="21" ref="1">
    <original>D</original>
    <variation>E</variation>
    <location>
        <position position="62"/>
    </location>
</feature>
<feature type="sequence conflict" description="In Ref. 1; AAA20598." evidence="21" ref="1">
    <original>Y</original>
    <variation>D</variation>
    <location>
        <position position="308"/>
    </location>
</feature>
<feature type="sequence conflict" description="In Ref. 1; AAA20598." evidence="21" ref="1">
    <original>V</original>
    <variation>W</variation>
    <location>
        <position position="464"/>
    </location>
</feature>
<feature type="sequence conflict" description="In Ref. 1; AAA20598." evidence="21" ref="1">
    <original>ES</original>
    <variation>AR</variation>
    <location>
        <begin position="926"/>
        <end position="927"/>
    </location>
</feature>
<feature type="strand" evidence="27">
    <location>
        <begin position="17"/>
        <end position="22"/>
    </location>
</feature>
<feature type="helix" evidence="27">
    <location>
        <begin position="23"/>
        <end position="25"/>
    </location>
</feature>
<feature type="strand" evidence="27">
    <location>
        <begin position="33"/>
        <end position="36"/>
    </location>
</feature>
<feature type="strand" evidence="27">
    <location>
        <begin position="43"/>
        <end position="48"/>
    </location>
</feature>
<feature type="strand" evidence="27">
    <location>
        <begin position="54"/>
        <end position="61"/>
    </location>
</feature>
<feature type="strand" evidence="27">
    <location>
        <begin position="63"/>
        <end position="65"/>
    </location>
</feature>
<feature type="strand" evidence="27">
    <location>
        <begin position="70"/>
        <end position="74"/>
    </location>
</feature>
<feature type="strand" evidence="27">
    <location>
        <begin position="84"/>
        <end position="95"/>
    </location>
</feature>
<feature type="helix" evidence="27">
    <location>
        <begin position="97"/>
        <end position="99"/>
    </location>
</feature>
<feature type="strand" evidence="27">
    <location>
        <begin position="109"/>
        <end position="121"/>
    </location>
</feature>
<feature type="strand" evidence="27">
    <location>
        <begin position="130"/>
        <end position="132"/>
    </location>
</feature>
<feature type="strand" evidence="27">
    <location>
        <begin position="135"/>
        <end position="142"/>
    </location>
</feature>
<feature type="strand" evidence="29">
    <location>
        <begin position="147"/>
        <end position="150"/>
    </location>
</feature>
<feature type="turn" evidence="29">
    <location>
        <begin position="151"/>
        <end position="153"/>
    </location>
</feature>
<feature type="strand" evidence="29">
    <location>
        <begin position="154"/>
        <end position="156"/>
    </location>
</feature>
<feature type="strand" evidence="27">
    <location>
        <begin position="160"/>
        <end position="166"/>
    </location>
</feature>
<feature type="strand" evidence="27">
    <location>
        <begin position="171"/>
        <end position="182"/>
    </location>
</feature>
<feature type="strand" evidence="27">
    <location>
        <begin position="184"/>
        <end position="196"/>
    </location>
</feature>
<feature type="strand" evidence="28">
    <location>
        <begin position="441"/>
        <end position="446"/>
    </location>
</feature>
<feature type="strand" evidence="28">
    <location>
        <begin position="449"/>
        <end position="453"/>
    </location>
</feature>
<feature type="strand" evidence="28">
    <location>
        <begin position="460"/>
        <end position="462"/>
    </location>
</feature>
<feature type="strand" evidence="28">
    <location>
        <begin position="466"/>
        <end position="473"/>
    </location>
</feature>
<feature type="turn" evidence="28">
    <location>
        <begin position="479"/>
        <end position="481"/>
    </location>
</feature>
<feature type="strand" evidence="28">
    <location>
        <begin position="482"/>
        <end position="496"/>
    </location>
</feature>
<feature type="strand" evidence="28">
    <location>
        <begin position="503"/>
        <end position="510"/>
    </location>
</feature>
<feature type="helix" evidence="34">
    <location>
        <begin position="612"/>
        <end position="614"/>
    </location>
</feature>
<feature type="strand" evidence="34">
    <location>
        <begin position="615"/>
        <end position="623"/>
    </location>
</feature>
<feature type="strand" evidence="34">
    <location>
        <begin position="625"/>
        <end position="634"/>
    </location>
</feature>
<feature type="strand" evidence="33">
    <location>
        <begin position="637"/>
        <end position="639"/>
    </location>
</feature>
<feature type="strand" evidence="34">
    <location>
        <begin position="642"/>
        <end position="649"/>
    </location>
</feature>
<feature type="helix" evidence="34">
    <location>
        <begin position="655"/>
        <end position="668"/>
    </location>
</feature>
<feature type="strand" evidence="34">
    <location>
        <begin position="679"/>
        <end position="683"/>
    </location>
</feature>
<feature type="strand" evidence="34">
    <location>
        <begin position="685"/>
        <end position="694"/>
    </location>
</feature>
<feature type="helix" evidence="34">
    <location>
        <begin position="701"/>
        <end position="707"/>
    </location>
</feature>
<feature type="turn" evidence="34">
    <location>
        <begin position="708"/>
        <end position="710"/>
    </location>
</feature>
<feature type="helix" evidence="34">
    <location>
        <begin position="714"/>
        <end position="733"/>
    </location>
</feature>
<feature type="helix" evidence="34">
    <location>
        <begin position="743"/>
        <end position="745"/>
    </location>
</feature>
<feature type="strand" evidence="34">
    <location>
        <begin position="746"/>
        <end position="748"/>
    </location>
</feature>
<feature type="strand" evidence="34">
    <location>
        <begin position="754"/>
        <end position="756"/>
    </location>
</feature>
<feature type="strand" evidence="32">
    <location>
        <begin position="761"/>
        <end position="763"/>
    </location>
</feature>
<feature type="helix" evidence="31">
    <location>
        <begin position="765"/>
        <end position="767"/>
    </location>
</feature>
<feature type="helix" evidence="34">
    <location>
        <begin position="784"/>
        <end position="786"/>
    </location>
</feature>
<feature type="helix" evidence="34">
    <location>
        <begin position="789"/>
        <end position="794"/>
    </location>
</feature>
<feature type="helix" evidence="34">
    <location>
        <begin position="799"/>
        <end position="814"/>
    </location>
</feature>
<feature type="turn" evidence="32">
    <location>
        <begin position="815"/>
        <end position="817"/>
    </location>
</feature>
<feature type="turn" evidence="34">
    <location>
        <begin position="820"/>
        <end position="823"/>
    </location>
</feature>
<feature type="helix" evidence="34">
    <location>
        <begin position="826"/>
        <end position="834"/>
    </location>
</feature>
<feature type="helix" evidence="34">
    <location>
        <begin position="847"/>
        <end position="856"/>
    </location>
</feature>
<feature type="helix" evidence="34">
    <location>
        <begin position="861"/>
        <end position="863"/>
    </location>
</feature>
<feature type="helix" evidence="34">
    <location>
        <begin position="867"/>
        <end position="879"/>
    </location>
</feature>
<feature type="helix" evidence="34">
    <location>
        <begin position="881"/>
        <end position="884"/>
    </location>
</feature>
<feature type="helix" evidence="30">
    <location>
        <begin position="912"/>
        <end position="918"/>
    </location>
</feature>
<feature type="helix" evidence="30">
    <location>
        <begin position="922"/>
        <end position="924"/>
    </location>
</feature>
<feature type="helix" evidence="30">
    <location>
        <begin position="925"/>
        <end position="930"/>
    </location>
</feature>
<feature type="helix" evidence="30">
    <location>
        <begin position="936"/>
        <end position="939"/>
    </location>
</feature>
<feature type="helix" evidence="30">
    <location>
        <begin position="944"/>
        <end position="950"/>
    </location>
</feature>
<feature type="helix" evidence="30">
    <location>
        <begin position="955"/>
        <end position="965"/>
    </location>
</feature>